<reference key="1">
    <citation type="journal article" date="2006" name="PLoS Biol.">
        <title>The genome of deep-sea vent chemolithoautotroph Thiomicrospira crunogena XCL-2.</title>
        <authorList>
            <person name="Scott K.M."/>
            <person name="Sievert S.M."/>
            <person name="Abril F.N."/>
            <person name="Ball L.A."/>
            <person name="Barrett C.J."/>
            <person name="Blake R.A."/>
            <person name="Boller A.J."/>
            <person name="Chain P.S.G."/>
            <person name="Clark J.A."/>
            <person name="Davis C.R."/>
            <person name="Detter C."/>
            <person name="Do K.F."/>
            <person name="Dobrinski K.P."/>
            <person name="Faza B.I."/>
            <person name="Fitzpatrick K.A."/>
            <person name="Freyermuth S.K."/>
            <person name="Harmer T.L."/>
            <person name="Hauser L.J."/>
            <person name="Huegler M."/>
            <person name="Kerfeld C.A."/>
            <person name="Klotz M.G."/>
            <person name="Kong W.W."/>
            <person name="Land M."/>
            <person name="Lapidus A."/>
            <person name="Larimer F.W."/>
            <person name="Longo D.L."/>
            <person name="Lucas S."/>
            <person name="Malfatti S.A."/>
            <person name="Massey S.E."/>
            <person name="Martin D.D."/>
            <person name="McCuddin Z."/>
            <person name="Meyer F."/>
            <person name="Moore J.L."/>
            <person name="Ocampo L.H. Jr."/>
            <person name="Paul J.H."/>
            <person name="Paulsen I.T."/>
            <person name="Reep D.K."/>
            <person name="Ren Q."/>
            <person name="Ross R.L."/>
            <person name="Sato P.Y."/>
            <person name="Thomas P."/>
            <person name="Tinkham L.E."/>
            <person name="Zeruth G.T."/>
        </authorList>
    </citation>
    <scope>NUCLEOTIDE SEQUENCE [LARGE SCALE GENOMIC DNA]</scope>
    <source>
        <strain>DSM 25203 / XCL-2</strain>
    </source>
</reference>
<gene>
    <name evidence="1" type="primary">cheB</name>
    <name type="ordered locus">Tcr_0758</name>
</gene>
<evidence type="ECO:0000255" key="1">
    <source>
        <dbReference type="HAMAP-Rule" id="MF_00099"/>
    </source>
</evidence>
<organism>
    <name type="scientific">Hydrogenovibrio crunogenus (strain DSM 25203 / XCL-2)</name>
    <name type="common">Thiomicrospira crunogena</name>
    <dbReference type="NCBI Taxonomy" id="317025"/>
    <lineage>
        <taxon>Bacteria</taxon>
        <taxon>Pseudomonadati</taxon>
        <taxon>Pseudomonadota</taxon>
        <taxon>Gammaproteobacteria</taxon>
        <taxon>Thiotrichales</taxon>
        <taxon>Piscirickettsiaceae</taxon>
        <taxon>Hydrogenovibrio</taxon>
    </lineage>
</organism>
<proteinExistence type="inferred from homology"/>
<protein>
    <recommendedName>
        <fullName evidence="1">Protein-glutamate methylesterase/protein-glutamine glutaminase</fullName>
        <ecNumber evidence="1">3.1.1.61</ecNumber>
        <ecNumber evidence="1">3.5.1.44</ecNumber>
    </recommendedName>
</protein>
<name>CHEB_HYDCU</name>
<keyword id="KW-0145">Chemotaxis</keyword>
<keyword id="KW-0963">Cytoplasm</keyword>
<keyword id="KW-0378">Hydrolase</keyword>
<keyword id="KW-0597">Phosphoprotein</keyword>
<comment type="function">
    <text evidence="1">Involved in chemotaxis. Part of a chemotaxis signal transduction system that modulates chemotaxis in response to various stimuli. Catalyzes the demethylation of specific methylglutamate residues introduced into the chemoreceptors (methyl-accepting chemotaxis proteins or MCP) by CheR. Also mediates the irreversible deamidation of specific glutamine residues to glutamic acid.</text>
</comment>
<comment type="catalytic activity">
    <reaction evidence="1">
        <text>[protein]-L-glutamate 5-O-methyl ester + H2O = L-glutamyl-[protein] + methanol + H(+)</text>
        <dbReference type="Rhea" id="RHEA:23236"/>
        <dbReference type="Rhea" id="RHEA-COMP:10208"/>
        <dbReference type="Rhea" id="RHEA-COMP:10311"/>
        <dbReference type="ChEBI" id="CHEBI:15377"/>
        <dbReference type="ChEBI" id="CHEBI:15378"/>
        <dbReference type="ChEBI" id="CHEBI:17790"/>
        <dbReference type="ChEBI" id="CHEBI:29973"/>
        <dbReference type="ChEBI" id="CHEBI:82795"/>
        <dbReference type="EC" id="3.1.1.61"/>
    </reaction>
</comment>
<comment type="catalytic activity">
    <reaction evidence="1">
        <text>L-glutaminyl-[protein] + H2O = L-glutamyl-[protein] + NH4(+)</text>
        <dbReference type="Rhea" id="RHEA:16441"/>
        <dbReference type="Rhea" id="RHEA-COMP:10207"/>
        <dbReference type="Rhea" id="RHEA-COMP:10208"/>
        <dbReference type="ChEBI" id="CHEBI:15377"/>
        <dbReference type="ChEBI" id="CHEBI:28938"/>
        <dbReference type="ChEBI" id="CHEBI:29973"/>
        <dbReference type="ChEBI" id="CHEBI:30011"/>
        <dbReference type="EC" id="3.5.1.44"/>
    </reaction>
</comment>
<comment type="subcellular location">
    <subcellularLocation>
        <location evidence="1">Cytoplasm</location>
    </subcellularLocation>
</comment>
<comment type="domain">
    <text evidence="1">Contains a C-terminal catalytic domain, and an N-terminal region which modulates catalytic activity.</text>
</comment>
<comment type="PTM">
    <text evidence="1">Phosphorylated by CheA. Phosphorylation of the N-terminal regulatory domain activates the methylesterase activity.</text>
</comment>
<comment type="similarity">
    <text evidence="1">Belongs to the CheB family.</text>
</comment>
<feature type="chain" id="PRO_0000264330" description="Protein-glutamate methylesterase/protein-glutamine glutaminase">
    <location>
        <begin position="1"/>
        <end position="376"/>
    </location>
</feature>
<feature type="domain" description="Response regulatory" evidence="1">
    <location>
        <begin position="5"/>
        <end position="122"/>
    </location>
</feature>
<feature type="domain" description="CheB-type methylesterase" evidence="1">
    <location>
        <begin position="185"/>
        <end position="376"/>
    </location>
</feature>
<feature type="active site" evidence="1">
    <location>
        <position position="197"/>
    </location>
</feature>
<feature type="active site" evidence="1">
    <location>
        <position position="223"/>
    </location>
</feature>
<feature type="active site" evidence="1">
    <location>
        <position position="319"/>
    </location>
</feature>
<feature type="modified residue" description="4-aspartylphosphate" evidence="1">
    <location>
        <position position="56"/>
    </location>
</feature>
<accession>Q31HL9</accession>
<sequence length="376" mass="41131">MSKIKVLIVDDSALVRQMLQEMLKSDPEIEVVGTASDPYDAREKVKQLHPDVLTLDVEMPRMDGVTFLKNLMRLHPLPVVMISTLTEKGADITFEALDLGAVDFVAKPKIDLQHTFEDYTDEICRKVKTASKVSKWQLERQYARYVANKESKPKVLSKPGSLVSKVVEKFTTDAIVPKKAPSDFSKPSHKVIALGASTGGTEAIKEVLMRLPSTTPAIVITQHIPASFSLPFAQRMNSVSEMEVTQAEDRQPILAGHVYIAPGDKHLLVERTSSGYICRLNDGPPVNRHKPSVDVMFRTVVQSVGKNAVGVLLTGMGADGAKGMKELQEIGVPTIVQDEKTCVVWGMPGEAVKLGAADYVLPLGSIPEKILALIKK</sequence>
<dbReference type="EC" id="3.1.1.61" evidence="1"/>
<dbReference type="EC" id="3.5.1.44" evidence="1"/>
<dbReference type="EMBL" id="CP000109">
    <property type="protein sequence ID" value="ABB41354.1"/>
    <property type="molecule type" value="Genomic_DNA"/>
</dbReference>
<dbReference type="SMR" id="Q31HL9"/>
<dbReference type="STRING" id="317025.Tcr_0758"/>
<dbReference type="KEGG" id="tcx:Tcr_0758"/>
<dbReference type="eggNOG" id="COG2201">
    <property type="taxonomic scope" value="Bacteria"/>
</dbReference>
<dbReference type="HOGENOM" id="CLU_000445_51_0_6"/>
<dbReference type="OrthoDB" id="9793421at2"/>
<dbReference type="GO" id="GO:0005737">
    <property type="term" value="C:cytoplasm"/>
    <property type="evidence" value="ECO:0007669"/>
    <property type="project" value="UniProtKB-SubCell"/>
</dbReference>
<dbReference type="GO" id="GO:0000156">
    <property type="term" value="F:phosphorelay response regulator activity"/>
    <property type="evidence" value="ECO:0007669"/>
    <property type="project" value="InterPro"/>
</dbReference>
<dbReference type="GO" id="GO:0008984">
    <property type="term" value="F:protein-glutamate methylesterase activity"/>
    <property type="evidence" value="ECO:0007669"/>
    <property type="project" value="UniProtKB-UniRule"/>
</dbReference>
<dbReference type="GO" id="GO:0050568">
    <property type="term" value="F:protein-glutamine glutaminase activity"/>
    <property type="evidence" value="ECO:0007669"/>
    <property type="project" value="UniProtKB-UniRule"/>
</dbReference>
<dbReference type="GO" id="GO:0006935">
    <property type="term" value="P:chemotaxis"/>
    <property type="evidence" value="ECO:0007669"/>
    <property type="project" value="UniProtKB-UniRule"/>
</dbReference>
<dbReference type="CDD" id="cd16432">
    <property type="entry name" value="CheB_Rec"/>
    <property type="match status" value="1"/>
</dbReference>
<dbReference type="CDD" id="cd17541">
    <property type="entry name" value="REC_CheB-like"/>
    <property type="match status" value="1"/>
</dbReference>
<dbReference type="Gene3D" id="3.40.50.2300">
    <property type="match status" value="1"/>
</dbReference>
<dbReference type="Gene3D" id="3.40.50.180">
    <property type="entry name" value="Methylesterase CheB, C-terminal domain"/>
    <property type="match status" value="1"/>
</dbReference>
<dbReference type="HAMAP" id="MF_00099">
    <property type="entry name" value="CheB_chemtxs"/>
    <property type="match status" value="1"/>
</dbReference>
<dbReference type="InterPro" id="IPR008248">
    <property type="entry name" value="CheB-like"/>
</dbReference>
<dbReference type="InterPro" id="IPR035909">
    <property type="entry name" value="CheB_C"/>
</dbReference>
<dbReference type="InterPro" id="IPR011006">
    <property type="entry name" value="CheY-like_superfamily"/>
</dbReference>
<dbReference type="InterPro" id="IPR000673">
    <property type="entry name" value="Sig_transdc_resp-reg_Me-estase"/>
</dbReference>
<dbReference type="InterPro" id="IPR001789">
    <property type="entry name" value="Sig_transdc_resp-reg_receiver"/>
</dbReference>
<dbReference type="NCBIfam" id="NF001965">
    <property type="entry name" value="PRK00742.1"/>
    <property type="match status" value="1"/>
</dbReference>
<dbReference type="NCBIfam" id="NF009206">
    <property type="entry name" value="PRK12555.1"/>
    <property type="match status" value="1"/>
</dbReference>
<dbReference type="PANTHER" id="PTHR42872">
    <property type="entry name" value="PROTEIN-GLUTAMATE METHYLESTERASE/PROTEIN-GLUTAMINE GLUTAMINASE"/>
    <property type="match status" value="1"/>
</dbReference>
<dbReference type="PANTHER" id="PTHR42872:SF6">
    <property type="entry name" value="PROTEIN-GLUTAMATE METHYLESTERASE_PROTEIN-GLUTAMINE GLUTAMINASE"/>
    <property type="match status" value="1"/>
</dbReference>
<dbReference type="Pfam" id="PF01339">
    <property type="entry name" value="CheB_methylest"/>
    <property type="match status" value="1"/>
</dbReference>
<dbReference type="Pfam" id="PF00072">
    <property type="entry name" value="Response_reg"/>
    <property type="match status" value="1"/>
</dbReference>
<dbReference type="PIRSF" id="PIRSF000876">
    <property type="entry name" value="RR_chemtxs_CheB"/>
    <property type="match status" value="1"/>
</dbReference>
<dbReference type="SMART" id="SM00448">
    <property type="entry name" value="REC"/>
    <property type="match status" value="1"/>
</dbReference>
<dbReference type="SUPFAM" id="SSF52172">
    <property type="entry name" value="CheY-like"/>
    <property type="match status" value="1"/>
</dbReference>
<dbReference type="SUPFAM" id="SSF52738">
    <property type="entry name" value="Methylesterase CheB, C-terminal domain"/>
    <property type="match status" value="1"/>
</dbReference>
<dbReference type="PROSITE" id="PS50122">
    <property type="entry name" value="CHEB"/>
    <property type="match status" value="1"/>
</dbReference>
<dbReference type="PROSITE" id="PS50110">
    <property type="entry name" value="RESPONSE_REGULATORY"/>
    <property type="match status" value="1"/>
</dbReference>